<keyword id="KW-0143">Chaperone</keyword>
<keyword id="KW-0963">Cytoplasm</keyword>
<keyword id="KW-1185">Reference proteome</keyword>
<accession>A8H8W4</accession>
<evidence type="ECO:0000255" key="1">
    <source>
        <dbReference type="HAMAP-Rule" id="MF_00580"/>
    </source>
</evidence>
<name>CH10_SHEPA</name>
<gene>
    <name evidence="1" type="primary">groES</name>
    <name evidence="1" type="synonym">groS</name>
    <name type="ordered locus">Spea_3690</name>
</gene>
<proteinExistence type="inferred from homology"/>
<reference key="1">
    <citation type="submission" date="2007-10" db="EMBL/GenBank/DDBJ databases">
        <title>Complete sequence of Shewanella pealeana ATCC 700345.</title>
        <authorList>
            <consortium name="US DOE Joint Genome Institute"/>
            <person name="Copeland A."/>
            <person name="Lucas S."/>
            <person name="Lapidus A."/>
            <person name="Barry K."/>
            <person name="Glavina del Rio T."/>
            <person name="Dalin E."/>
            <person name="Tice H."/>
            <person name="Pitluck S."/>
            <person name="Chertkov O."/>
            <person name="Brettin T."/>
            <person name="Bruce D."/>
            <person name="Detter J.C."/>
            <person name="Han C."/>
            <person name="Schmutz J."/>
            <person name="Larimer F."/>
            <person name="Land M."/>
            <person name="Hauser L."/>
            <person name="Kyrpides N."/>
            <person name="Kim E."/>
            <person name="Zhao J.-S.Z."/>
            <person name="Manno D."/>
            <person name="Hawari J."/>
            <person name="Richardson P."/>
        </authorList>
    </citation>
    <scope>NUCLEOTIDE SEQUENCE [LARGE SCALE GENOMIC DNA]</scope>
    <source>
        <strain>ATCC 700345 / ANG-SQ1</strain>
    </source>
</reference>
<dbReference type="EMBL" id="CP000851">
    <property type="protein sequence ID" value="ABV89001.1"/>
    <property type="molecule type" value="Genomic_DNA"/>
</dbReference>
<dbReference type="RefSeq" id="WP_012156885.1">
    <property type="nucleotide sequence ID" value="NC_009901.1"/>
</dbReference>
<dbReference type="SMR" id="A8H8W4"/>
<dbReference type="STRING" id="398579.Spea_3690"/>
<dbReference type="KEGG" id="spl:Spea_3690"/>
<dbReference type="eggNOG" id="COG0234">
    <property type="taxonomic scope" value="Bacteria"/>
</dbReference>
<dbReference type="HOGENOM" id="CLU_132825_1_1_6"/>
<dbReference type="OrthoDB" id="9806791at2"/>
<dbReference type="Proteomes" id="UP000002608">
    <property type="component" value="Chromosome"/>
</dbReference>
<dbReference type="GO" id="GO:0005737">
    <property type="term" value="C:cytoplasm"/>
    <property type="evidence" value="ECO:0007669"/>
    <property type="project" value="UniProtKB-SubCell"/>
</dbReference>
<dbReference type="GO" id="GO:0005524">
    <property type="term" value="F:ATP binding"/>
    <property type="evidence" value="ECO:0007669"/>
    <property type="project" value="InterPro"/>
</dbReference>
<dbReference type="GO" id="GO:0046872">
    <property type="term" value="F:metal ion binding"/>
    <property type="evidence" value="ECO:0007669"/>
    <property type="project" value="TreeGrafter"/>
</dbReference>
<dbReference type="GO" id="GO:0044183">
    <property type="term" value="F:protein folding chaperone"/>
    <property type="evidence" value="ECO:0007669"/>
    <property type="project" value="InterPro"/>
</dbReference>
<dbReference type="GO" id="GO:0051087">
    <property type="term" value="F:protein-folding chaperone binding"/>
    <property type="evidence" value="ECO:0007669"/>
    <property type="project" value="TreeGrafter"/>
</dbReference>
<dbReference type="GO" id="GO:0051082">
    <property type="term" value="F:unfolded protein binding"/>
    <property type="evidence" value="ECO:0007669"/>
    <property type="project" value="TreeGrafter"/>
</dbReference>
<dbReference type="GO" id="GO:0051085">
    <property type="term" value="P:chaperone cofactor-dependent protein refolding"/>
    <property type="evidence" value="ECO:0007669"/>
    <property type="project" value="TreeGrafter"/>
</dbReference>
<dbReference type="CDD" id="cd00320">
    <property type="entry name" value="cpn10"/>
    <property type="match status" value="1"/>
</dbReference>
<dbReference type="FunFam" id="2.30.33.40:FF:000001">
    <property type="entry name" value="10 kDa chaperonin"/>
    <property type="match status" value="1"/>
</dbReference>
<dbReference type="Gene3D" id="2.30.33.40">
    <property type="entry name" value="GroES chaperonin"/>
    <property type="match status" value="1"/>
</dbReference>
<dbReference type="HAMAP" id="MF_00580">
    <property type="entry name" value="CH10"/>
    <property type="match status" value="1"/>
</dbReference>
<dbReference type="InterPro" id="IPR020818">
    <property type="entry name" value="Chaperonin_GroES"/>
</dbReference>
<dbReference type="InterPro" id="IPR037124">
    <property type="entry name" value="Chaperonin_GroES_sf"/>
</dbReference>
<dbReference type="InterPro" id="IPR018369">
    <property type="entry name" value="Chaprnonin_Cpn10_CS"/>
</dbReference>
<dbReference type="InterPro" id="IPR011032">
    <property type="entry name" value="GroES-like_sf"/>
</dbReference>
<dbReference type="NCBIfam" id="NF001526">
    <property type="entry name" value="PRK00364.1-1"/>
    <property type="match status" value="1"/>
</dbReference>
<dbReference type="NCBIfam" id="NF001527">
    <property type="entry name" value="PRK00364.1-2"/>
    <property type="match status" value="1"/>
</dbReference>
<dbReference type="NCBIfam" id="NF001531">
    <property type="entry name" value="PRK00364.2-2"/>
    <property type="match status" value="1"/>
</dbReference>
<dbReference type="PANTHER" id="PTHR10772">
    <property type="entry name" value="10 KDA HEAT SHOCK PROTEIN"/>
    <property type="match status" value="1"/>
</dbReference>
<dbReference type="PANTHER" id="PTHR10772:SF58">
    <property type="entry name" value="CO-CHAPERONIN GROES"/>
    <property type="match status" value="1"/>
</dbReference>
<dbReference type="Pfam" id="PF00166">
    <property type="entry name" value="Cpn10"/>
    <property type="match status" value="1"/>
</dbReference>
<dbReference type="PRINTS" id="PR00297">
    <property type="entry name" value="CHAPERONIN10"/>
</dbReference>
<dbReference type="SMART" id="SM00883">
    <property type="entry name" value="Cpn10"/>
    <property type="match status" value="1"/>
</dbReference>
<dbReference type="SUPFAM" id="SSF50129">
    <property type="entry name" value="GroES-like"/>
    <property type="match status" value="1"/>
</dbReference>
<dbReference type="PROSITE" id="PS00681">
    <property type="entry name" value="CHAPERONINS_CPN10"/>
    <property type="match status" value="1"/>
</dbReference>
<organism>
    <name type="scientific">Shewanella pealeana (strain ATCC 700345 / ANG-SQ1)</name>
    <dbReference type="NCBI Taxonomy" id="398579"/>
    <lineage>
        <taxon>Bacteria</taxon>
        <taxon>Pseudomonadati</taxon>
        <taxon>Pseudomonadota</taxon>
        <taxon>Gammaproteobacteria</taxon>
        <taxon>Alteromonadales</taxon>
        <taxon>Shewanellaceae</taxon>
        <taxon>Shewanella</taxon>
    </lineage>
</organism>
<protein>
    <recommendedName>
        <fullName evidence="1">Co-chaperonin GroES</fullName>
    </recommendedName>
    <alternativeName>
        <fullName evidence="1">10 kDa chaperonin</fullName>
    </alternativeName>
    <alternativeName>
        <fullName evidence="1">Chaperonin-10</fullName>
        <shortName evidence="1">Cpn10</shortName>
    </alternativeName>
</protein>
<sequence>MNIRPLHDRVIVKRSEVESKSAGGIVLTGSAAEQSSRGEVLAVGNGRILENGNLMPLDVKVGDIVIFNEGYGVKKEKIDGEEVLILSESDLMAVVG</sequence>
<feature type="chain" id="PRO_1000082393" description="Co-chaperonin GroES">
    <location>
        <begin position="1"/>
        <end position="96"/>
    </location>
</feature>
<comment type="function">
    <text evidence="1">Together with the chaperonin GroEL, plays an essential role in assisting protein folding. The GroEL-GroES system forms a nano-cage that allows encapsulation of the non-native substrate proteins and provides a physical environment optimized to promote and accelerate protein folding. GroES binds to the apical surface of the GroEL ring, thereby capping the opening of the GroEL channel.</text>
</comment>
<comment type="subunit">
    <text evidence="1">Heptamer of 7 subunits arranged in a ring. Interacts with the chaperonin GroEL.</text>
</comment>
<comment type="subcellular location">
    <subcellularLocation>
        <location evidence="1">Cytoplasm</location>
    </subcellularLocation>
</comment>
<comment type="similarity">
    <text evidence="1">Belongs to the GroES chaperonin family.</text>
</comment>